<gene>
    <name evidence="1" type="primary">gatB</name>
    <name type="ordered locus">RSKD131_0288</name>
</gene>
<sequence length="503" mass="55161">MLDLTYEAPKPKVIAGAKHDWELVIGMEIHAQVSSNAKLFSGASTTFGAEPNSNVSFVDCAMPGMLPVINEFCVAQAVRTGLGLKAQINLFSAFDRKNYFYPDLPQGYQISQLYHPIVGEGEVLVEMAPGIARLVRIERIHLEQDAGKSIHDMDPNLSFVDFNRTGVALMEIVSRPDIRGPEEAAAYVAKLRQILRYLGTCDGNMQNGNLRADVNVSVCRPGQYEKYQETQDFSHLGTRCEIKNMNSMRFIQQAIDYEARRQIAILEDGGKVVQETRLYDPDKGETRSMRSKEEAHDYRYFPDPDLLPLEIEQGWVDEIAASMPELPDAKKARFMADYGVTDYDANVLTAELEAAAYFEEVARGRDGKQAANWVINELFGRLNKQGLTIADTPVKAGQLGGVLDLIASGEISGKMAKDLFEILWTEGGDPAEVAAARGMKQVTDTGAIETAVDEIIAANPAQVEKAKANPKLAGWFVGQVIKATGGKANPAAVNQIVAEKLGL</sequence>
<reference key="1">
    <citation type="journal article" date="2009" name="J. Bacteriol.">
        <title>Complete genome sequence of Rhodobacter sphaeroides KD131.</title>
        <authorList>
            <person name="Lim S.-K."/>
            <person name="Kim S.J."/>
            <person name="Cha S.H."/>
            <person name="Oh Y.-K."/>
            <person name="Rhee H.-J."/>
            <person name="Kim M.-S."/>
            <person name="Lee J.K."/>
        </authorList>
    </citation>
    <scope>NUCLEOTIDE SEQUENCE [LARGE SCALE GENOMIC DNA]</scope>
    <source>
        <strain>KD131 / KCTC 12085</strain>
    </source>
</reference>
<keyword id="KW-0067">ATP-binding</keyword>
<keyword id="KW-0436">Ligase</keyword>
<keyword id="KW-0547">Nucleotide-binding</keyword>
<keyword id="KW-0648">Protein biosynthesis</keyword>
<evidence type="ECO:0000255" key="1">
    <source>
        <dbReference type="HAMAP-Rule" id="MF_00121"/>
    </source>
</evidence>
<organism>
    <name type="scientific">Cereibacter sphaeroides (strain KD131 / KCTC 12085)</name>
    <name type="common">Rhodobacter sphaeroides</name>
    <dbReference type="NCBI Taxonomy" id="557760"/>
    <lineage>
        <taxon>Bacteria</taxon>
        <taxon>Pseudomonadati</taxon>
        <taxon>Pseudomonadota</taxon>
        <taxon>Alphaproteobacteria</taxon>
        <taxon>Rhodobacterales</taxon>
        <taxon>Paracoccaceae</taxon>
        <taxon>Cereibacter</taxon>
    </lineage>
</organism>
<feature type="chain" id="PRO_1000122533" description="Aspartyl/glutamyl-tRNA(Asn/Gln) amidotransferase subunit B">
    <location>
        <begin position="1"/>
        <end position="503"/>
    </location>
</feature>
<comment type="function">
    <text evidence="1">Allows the formation of correctly charged Asn-tRNA(Asn) or Gln-tRNA(Gln) through the transamidation of misacylated Asp-tRNA(Asn) or Glu-tRNA(Gln) in organisms which lack either or both of asparaginyl-tRNA or glutaminyl-tRNA synthetases. The reaction takes place in the presence of glutamine and ATP through an activated phospho-Asp-tRNA(Asn) or phospho-Glu-tRNA(Gln).</text>
</comment>
<comment type="catalytic activity">
    <reaction evidence="1">
        <text>L-glutamyl-tRNA(Gln) + L-glutamine + ATP + H2O = L-glutaminyl-tRNA(Gln) + L-glutamate + ADP + phosphate + H(+)</text>
        <dbReference type="Rhea" id="RHEA:17521"/>
        <dbReference type="Rhea" id="RHEA-COMP:9681"/>
        <dbReference type="Rhea" id="RHEA-COMP:9684"/>
        <dbReference type="ChEBI" id="CHEBI:15377"/>
        <dbReference type="ChEBI" id="CHEBI:15378"/>
        <dbReference type="ChEBI" id="CHEBI:29985"/>
        <dbReference type="ChEBI" id="CHEBI:30616"/>
        <dbReference type="ChEBI" id="CHEBI:43474"/>
        <dbReference type="ChEBI" id="CHEBI:58359"/>
        <dbReference type="ChEBI" id="CHEBI:78520"/>
        <dbReference type="ChEBI" id="CHEBI:78521"/>
        <dbReference type="ChEBI" id="CHEBI:456216"/>
    </reaction>
</comment>
<comment type="catalytic activity">
    <reaction evidence="1">
        <text>L-aspartyl-tRNA(Asn) + L-glutamine + ATP + H2O = L-asparaginyl-tRNA(Asn) + L-glutamate + ADP + phosphate + 2 H(+)</text>
        <dbReference type="Rhea" id="RHEA:14513"/>
        <dbReference type="Rhea" id="RHEA-COMP:9674"/>
        <dbReference type="Rhea" id="RHEA-COMP:9677"/>
        <dbReference type="ChEBI" id="CHEBI:15377"/>
        <dbReference type="ChEBI" id="CHEBI:15378"/>
        <dbReference type="ChEBI" id="CHEBI:29985"/>
        <dbReference type="ChEBI" id="CHEBI:30616"/>
        <dbReference type="ChEBI" id="CHEBI:43474"/>
        <dbReference type="ChEBI" id="CHEBI:58359"/>
        <dbReference type="ChEBI" id="CHEBI:78515"/>
        <dbReference type="ChEBI" id="CHEBI:78516"/>
        <dbReference type="ChEBI" id="CHEBI:456216"/>
    </reaction>
</comment>
<comment type="subunit">
    <text evidence="1">Heterotrimer of A, B and C subunits.</text>
</comment>
<comment type="similarity">
    <text evidence="1">Belongs to the GatB/GatE family. GatB subfamily.</text>
</comment>
<proteinExistence type="inferred from homology"/>
<dbReference type="EC" id="6.3.5.-" evidence="1"/>
<dbReference type="EMBL" id="CP001150">
    <property type="protein sequence ID" value="ACM00148.1"/>
    <property type="molecule type" value="Genomic_DNA"/>
</dbReference>
<dbReference type="RefSeq" id="WP_012643612.1">
    <property type="nucleotide sequence ID" value="NC_011963.1"/>
</dbReference>
<dbReference type="SMR" id="B9KMT6"/>
<dbReference type="GeneID" id="67445767"/>
<dbReference type="KEGG" id="rsk:RSKD131_0288"/>
<dbReference type="HOGENOM" id="CLU_019240_0_0_5"/>
<dbReference type="GO" id="GO:0050566">
    <property type="term" value="F:asparaginyl-tRNA synthase (glutamine-hydrolyzing) activity"/>
    <property type="evidence" value="ECO:0007669"/>
    <property type="project" value="RHEA"/>
</dbReference>
<dbReference type="GO" id="GO:0005524">
    <property type="term" value="F:ATP binding"/>
    <property type="evidence" value="ECO:0007669"/>
    <property type="project" value="UniProtKB-KW"/>
</dbReference>
<dbReference type="GO" id="GO:0050567">
    <property type="term" value="F:glutaminyl-tRNA synthase (glutamine-hydrolyzing) activity"/>
    <property type="evidence" value="ECO:0007669"/>
    <property type="project" value="UniProtKB-UniRule"/>
</dbReference>
<dbReference type="GO" id="GO:0070681">
    <property type="term" value="P:glutaminyl-tRNAGln biosynthesis via transamidation"/>
    <property type="evidence" value="ECO:0007669"/>
    <property type="project" value="TreeGrafter"/>
</dbReference>
<dbReference type="GO" id="GO:0006412">
    <property type="term" value="P:translation"/>
    <property type="evidence" value="ECO:0007669"/>
    <property type="project" value="UniProtKB-UniRule"/>
</dbReference>
<dbReference type="FunFam" id="1.10.10.410:FF:000001">
    <property type="entry name" value="Aspartyl/glutamyl-tRNA(Asn/Gln) amidotransferase subunit B"/>
    <property type="match status" value="1"/>
</dbReference>
<dbReference type="FunFam" id="1.10.150.380:FF:000001">
    <property type="entry name" value="Aspartyl/glutamyl-tRNA(Asn/Gln) amidotransferase subunit B"/>
    <property type="match status" value="1"/>
</dbReference>
<dbReference type="Gene3D" id="1.10.10.410">
    <property type="match status" value="1"/>
</dbReference>
<dbReference type="Gene3D" id="1.10.150.380">
    <property type="entry name" value="GatB domain, N-terminal subdomain"/>
    <property type="match status" value="1"/>
</dbReference>
<dbReference type="HAMAP" id="MF_00121">
    <property type="entry name" value="GatB"/>
    <property type="match status" value="1"/>
</dbReference>
<dbReference type="InterPro" id="IPR017959">
    <property type="entry name" value="Asn/Gln-tRNA_amidoTrfase_suB/E"/>
</dbReference>
<dbReference type="InterPro" id="IPR006075">
    <property type="entry name" value="Asn/Gln-tRNA_Trfase_suB/E_cat"/>
</dbReference>
<dbReference type="InterPro" id="IPR018027">
    <property type="entry name" value="Asn/Gln_amidotransferase"/>
</dbReference>
<dbReference type="InterPro" id="IPR003789">
    <property type="entry name" value="Asn/Gln_tRNA_amidoTrase-B-like"/>
</dbReference>
<dbReference type="InterPro" id="IPR004413">
    <property type="entry name" value="GatB"/>
</dbReference>
<dbReference type="InterPro" id="IPR042114">
    <property type="entry name" value="GatB_C_1"/>
</dbReference>
<dbReference type="InterPro" id="IPR023168">
    <property type="entry name" value="GatB_Yqey_C_2"/>
</dbReference>
<dbReference type="InterPro" id="IPR017958">
    <property type="entry name" value="Gln-tRNA_amidoTrfase_suB_CS"/>
</dbReference>
<dbReference type="InterPro" id="IPR014746">
    <property type="entry name" value="Gln_synth/guanido_kin_cat_dom"/>
</dbReference>
<dbReference type="NCBIfam" id="TIGR00133">
    <property type="entry name" value="gatB"/>
    <property type="match status" value="1"/>
</dbReference>
<dbReference type="NCBIfam" id="NF004012">
    <property type="entry name" value="PRK05477.1-2"/>
    <property type="match status" value="1"/>
</dbReference>
<dbReference type="NCBIfam" id="NF004014">
    <property type="entry name" value="PRK05477.1-4"/>
    <property type="match status" value="1"/>
</dbReference>
<dbReference type="NCBIfam" id="NF004015">
    <property type="entry name" value="PRK05477.1-5"/>
    <property type="match status" value="1"/>
</dbReference>
<dbReference type="PANTHER" id="PTHR11659">
    <property type="entry name" value="GLUTAMYL-TRNA GLN AMIDOTRANSFERASE SUBUNIT B MITOCHONDRIAL AND PROKARYOTIC PET112-RELATED"/>
    <property type="match status" value="1"/>
</dbReference>
<dbReference type="PANTHER" id="PTHR11659:SF0">
    <property type="entry name" value="GLUTAMYL-TRNA(GLN) AMIDOTRANSFERASE SUBUNIT B, MITOCHONDRIAL"/>
    <property type="match status" value="1"/>
</dbReference>
<dbReference type="Pfam" id="PF02934">
    <property type="entry name" value="GatB_N"/>
    <property type="match status" value="1"/>
</dbReference>
<dbReference type="Pfam" id="PF02637">
    <property type="entry name" value="GatB_Yqey"/>
    <property type="match status" value="1"/>
</dbReference>
<dbReference type="SMART" id="SM00845">
    <property type="entry name" value="GatB_Yqey"/>
    <property type="match status" value="1"/>
</dbReference>
<dbReference type="SUPFAM" id="SSF89095">
    <property type="entry name" value="GatB/YqeY motif"/>
    <property type="match status" value="1"/>
</dbReference>
<dbReference type="SUPFAM" id="SSF55931">
    <property type="entry name" value="Glutamine synthetase/guanido kinase"/>
    <property type="match status" value="1"/>
</dbReference>
<dbReference type="PROSITE" id="PS01234">
    <property type="entry name" value="GATB"/>
    <property type="match status" value="1"/>
</dbReference>
<accession>B9KMT6</accession>
<protein>
    <recommendedName>
        <fullName evidence="1">Aspartyl/glutamyl-tRNA(Asn/Gln) amidotransferase subunit B</fullName>
        <shortName evidence="1">Asp/Glu-ADT subunit B</shortName>
        <ecNumber evidence="1">6.3.5.-</ecNumber>
    </recommendedName>
</protein>
<name>GATB_CERSK</name>